<sequence length="99" mass="11093">MAVNPLDFLKNMTSFKDNIDNLKKEMSQIVVCGRAGSDVIVVEMNGEFLVKKVSIKEEFFSDLDNEALEHMIKSAFNDAISKVKEEIKSKTMGSMPFGI</sequence>
<protein>
    <recommendedName>
        <fullName evidence="1">Nucleoid-associated protein EbfC</fullName>
    </recommendedName>
</protein>
<proteinExistence type="inferred from homology"/>
<comment type="function">
    <text evidence="1">Binds to DNA and alters its conformation. May be involved in regulation of gene expression, nucleoid organization and DNA protection.</text>
</comment>
<comment type="subunit">
    <text evidence="1">Homodimer.</text>
</comment>
<comment type="subcellular location">
    <subcellularLocation>
        <location evidence="1">Cytoplasm</location>
        <location evidence="1">Nucleoid</location>
    </subcellularLocation>
</comment>
<comment type="similarity">
    <text evidence="1">Belongs to the YbaB/EbfC family.</text>
</comment>
<gene>
    <name evidence="1" type="primary">ebfC</name>
    <name type="ordered locus">BH0462</name>
</gene>
<accession>B2S0G4</accession>
<keyword id="KW-0963">Cytoplasm</keyword>
<keyword id="KW-0238">DNA-binding</keyword>
<name>EBFC_BORHD</name>
<evidence type="ECO:0000255" key="1">
    <source>
        <dbReference type="HAMAP-Rule" id="MF_00274"/>
    </source>
</evidence>
<reference key="1">
    <citation type="submission" date="2004-12" db="EMBL/GenBank/DDBJ databases">
        <title>The genome sequence of Borrelia hermsii and Borrelia turicatae: comparative analysis of two agents of endemic N. America relapsing fever.</title>
        <authorList>
            <person name="Porcella S.F."/>
            <person name="Raffel S.J."/>
            <person name="Schrumpf M.E."/>
            <person name="Montgomery B."/>
            <person name="Smith T."/>
            <person name="Schwan T.G."/>
        </authorList>
    </citation>
    <scope>NUCLEOTIDE SEQUENCE [LARGE SCALE GENOMIC DNA]</scope>
    <source>
        <strain>HS1 / DAH</strain>
    </source>
</reference>
<organism>
    <name type="scientific">Borrelia hermsii (strain HS1 / DAH)</name>
    <dbReference type="NCBI Taxonomy" id="314723"/>
    <lineage>
        <taxon>Bacteria</taxon>
        <taxon>Pseudomonadati</taxon>
        <taxon>Spirochaetota</taxon>
        <taxon>Spirochaetia</taxon>
        <taxon>Spirochaetales</taxon>
        <taxon>Borreliaceae</taxon>
        <taxon>Borrelia</taxon>
    </lineage>
</organism>
<dbReference type="EMBL" id="CP000048">
    <property type="protein sequence ID" value="AAX16970.1"/>
    <property type="molecule type" value="Genomic_DNA"/>
</dbReference>
<dbReference type="RefSeq" id="WP_012422226.1">
    <property type="nucleotide sequence ID" value="NZ_CP073136.1"/>
</dbReference>
<dbReference type="SMR" id="B2S0G4"/>
<dbReference type="KEGG" id="bhr:BH0462"/>
<dbReference type="HOGENOM" id="CLU_140930_4_1_12"/>
<dbReference type="Proteomes" id="UP000008834">
    <property type="component" value="Chromosome"/>
</dbReference>
<dbReference type="GO" id="GO:0043590">
    <property type="term" value="C:bacterial nucleoid"/>
    <property type="evidence" value="ECO:0007669"/>
    <property type="project" value="UniProtKB-UniRule"/>
</dbReference>
<dbReference type="GO" id="GO:0005737">
    <property type="term" value="C:cytoplasm"/>
    <property type="evidence" value="ECO:0007669"/>
    <property type="project" value="UniProtKB-UniRule"/>
</dbReference>
<dbReference type="GO" id="GO:0003677">
    <property type="term" value="F:DNA binding"/>
    <property type="evidence" value="ECO:0007669"/>
    <property type="project" value="UniProtKB-UniRule"/>
</dbReference>
<dbReference type="Gene3D" id="3.30.1310.10">
    <property type="entry name" value="Nucleoid-associated protein YbaB-like domain"/>
    <property type="match status" value="1"/>
</dbReference>
<dbReference type="HAMAP" id="MF_00274">
    <property type="entry name" value="DNA_YbaB_EbfC"/>
    <property type="match status" value="1"/>
</dbReference>
<dbReference type="InterPro" id="IPR036894">
    <property type="entry name" value="YbaB-like_sf"/>
</dbReference>
<dbReference type="InterPro" id="IPR004401">
    <property type="entry name" value="YbaB/EbfC"/>
</dbReference>
<dbReference type="NCBIfam" id="TIGR00103">
    <property type="entry name" value="DNA_YbaB_EbfC"/>
    <property type="match status" value="1"/>
</dbReference>
<dbReference type="Pfam" id="PF02575">
    <property type="entry name" value="YbaB_DNA_bd"/>
    <property type="match status" value="1"/>
</dbReference>
<dbReference type="PIRSF" id="PIRSF004555">
    <property type="entry name" value="UCP004555"/>
    <property type="match status" value="1"/>
</dbReference>
<dbReference type="SUPFAM" id="SSF82607">
    <property type="entry name" value="YbaB-like"/>
    <property type="match status" value="1"/>
</dbReference>
<feature type="chain" id="PRO_1000114585" description="Nucleoid-associated protein EbfC">
    <location>
        <begin position="1"/>
        <end position="99"/>
    </location>
</feature>